<accession>B9DTF3</accession>
<sequence>MAQAQYAGTGRRKNAVARVRLVPGTGKITVNSKDVEEYIPHADLRLVINQPFAVTSTEGSYDVFVNVNGGGYGGQSGAIRHGIARALLQVDPDFRDSLKRAGLLTRDARMVERKKPGLKKARKASQFSKR</sequence>
<organism>
    <name type="scientific">Streptococcus uberis (strain ATCC BAA-854 / 0140J)</name>
    <dbReference type="NCBI Taxonomy" id="218495"/>
    <lineage>
        <taxon>Bacteria</taxon>
        <taxon>Bacillati</taxon>
        <taxon>Bacillota</taxon>
        <taxon>Bacilli</taxon>
        <taxon>Lactobacillales</taxon>
        <taxon>Streptococcaceae</taxon>
        <taxon>Streptococcus</taxon>
    </lineage>
</organism>
<keyword id="KW-1185">Reference proteome</keyword>
<keyword id="KW-0687">Ribonucleoprotein</keyword>
<keyword id="KW-0689">Ribosomal protein</keyword>
<reference key="1">
    <citation type="journal article" date="2009" name="BMC Genomics">
        <title>Evidence for niche adaptation in the genome of the bovine pathogen Streptococcus uberis.</title>
        <authorList>
            <person name="Ward P.N."/>
            <person name="Holden M.T.G."/>
            <person name="Leigh J.A."/>
            <person name="Lennard N."/>
            <person name="Bignell A."/>
            <person name="Barron A."/>
            <person name="Clark L."/>
            <person name="Quail M.A."/>
            <person name="Woodward J."/>
            <person name="Barrell B.G."/>
            <person name="Egan S.A."/>
            <person name="Field T.R."/>
            <person name="Maskell D."/>
            <person name="Kehoe M."/>
            <person name="Dowson C.G."/>
            <person name="Chanter N."/>
            <person name="Whatmore A.M."/>
            <person name="Bentley S.D."/>
            <person name="Parkhill J."/>
        </authorList>
    </citation>
    <scope>NUCLEOTIDE SEQUENCE [LARGE SCALE GENOMIC DNA]</scope>
    <source>
        <strain>ATCC BAA-854 / 0140J</strain>
    </source>
</reference>
<gene>
    <name evidence="1" type="primary">rpsI</name>
    <name type="ordered locus">SUB0277</name>
</gene>
<proteinExistence type="inferred from homology"/>
<name>RS9_STRU0</name>
<comment type="similarity">
    <text evidence="1">Belongs to the universal ribosomal protein uS9 family.</text>
</comment>
<protein>
    <recommendedName>
        <fullName evidence="1">Small ribosomal subunit protein uS9</fullName>
    </recommendedName>
    <alternativeName>
        <fullName evidence="2">30S ribosomal protein S9</fullName>
    </alternativeName>
</protein>
<feature type="chain" id="PRO_1000146473" description="Small ribosomal subunit protein uS9">
    <location>
        <begin position="1"/>
        <end position="130"/>
    </location>
</feature>
<dbReference type="EMBL" id="AM946015">
    <property type="protein sequence ID" value="CAR40810.1"/>
    <property type="molecule type" value="Genomic_DNA"/>
</dbReference>
<dbReference type="RefSeq" id="WP_012657824.1">
    <property type="nucleotide sequence ID" value="NC_012004.1"/>
</dbReference>
<dbReference type="SMR" id="B9DTF3"/>
<dbReference type="STRING" id="218495.SUB0277"/>
<dbReference type="GeneID" id="93825570"/>
<dbReference type="KEGG" id="sub:SUB0277"/>
<dbReference type="eggNOG" id="COG0103">
    <property type="taxonomic scope" value="Bacteria"/>
</dbReference>
<dbReference type="HOGENOM" id="CLU_046483_2_1_9"/>
<dbReference type="OrthoDB" id="9803965at2"/>
<dbReference type="Proteomes" id="UP000000449">
    <property type="component" value="Chromosome"/>
</dbReference>
<dbReference type="GO" id="GO:0022627">
    <property type="term" value="C:cytosolic small ribosomal subunit"/>
    <property type="evidence" value="ECO:0007669"/>
    <property type="project" value="TreeGrafter"/>
</dbReference>
<dbReference type="GO" id="GO:0003723">
    <property type="term" value="F:RNA binding"/>
    <property type="evidence" value="ECO:0007669"/>
    <property type="project" value="TreeGrafter"/>
</dbReference>
<dbReference type="GO" id="GO:0003735">
    <property type="term" value="F:structural constituent of ribosome"/>
    <property type="evidence" value="ECO:0007669"/>
    <property type="project" value="InterPro"/>
</dbReference>
<dbReference type="GO" id="GO:0006412">
    <property type="term" value="P:translation"/>
    <property type="evidence" value="ECO:0007669"/>
    <property type="project" value="UniProtKB-UniRule"/>
</dbReference>
<dbReference type="FunFam" id="3.30.230.10:FF:000001">
    <property type="entry name" value="30S ribosomal protein S9"/>
    <property type="match status" value="1"/>
</dbReference>
<dbReference type="Gene3D" id="3.30.230.10">
    <property type="match status" value="1"/>
</dbReference>
<dbReference type="HAMAP" id="MF_00532_B">
    <property type="entry name" value="Ribosomal_uS9_B"/>
    <property type="match status" value="1"/>
</dbReference>
<dbReference type="InterPro" id="IPR020568">
    <property type="entry name" value="Ribosomal_Su5_D2-typ_SF"/>
</dbReference>
<dbReference type="InterPro" id="IPR000754">
    <property type="entry name" value="Ribosomal_uS9"/>
</dbReference>
<dbReference type="InterPro" id="IPR023035">
    <property type="entry name" value="Ribosomal_uS9_bac/plastid"/>
</dbReference>
<dbReference type="InterPro" id="IPR020574">
    <property type="entry name" value="Ribosomal_uS9_CS"/>
</dbReference>
<dbReference type="InterPro" id="IPR014721">
    <property type="entry name" value="Ribsml_uS5_D2-typ_fold_subgr"/>
</dbReference>
<dbReference type="NCBIfam" id="NF001099">
    <property type="entry name" value="PRK00132.1"/>
    <property type="match status" value="1"/>
</dbReference>
<dbReference type="PANTHER" id="PTHR21569">
    <property type="entry name" value="RIBOSOMAL PROTEIN S9"/>
    <property type="match status" value="1"/>
</dbReference>
<dbReference type="PANTHER" id="PTHR21569:SF1">
    <property type="entry name" value="SMALL RIBOSOMAL SUBUNIT PROTEIN US9M"/>
    <property type="match status" value="1"/>
</dbReference>
<dbReference type="Pfam" id="PF00380">
    <property type="entry name" value="Ribosomal_S9"/>
    <property type="match status" value="1"/>
</dbReference>
<dbReference type="SUPFAM" id="SSF54211">
    <property type="entry name" value="Ribosomal protein S5 domain 2-like"/>
    <property type="match status" value="1"/>
</dbReference>
<dbReference type="PROSITE" id="PS00360">
    <property type="entry name" value="RIBOSOMAL_S9"/>
    <property type="match status" value="1"/>
</dbReference>
<evidence type="ECO:0000255" key="1">
    <source>
        <dbReference type="HAMAP-Rule" id="MF_00532"/>
    </source>
</evidence>
<evidence type="ECO:0000305" key="2"/>